<feature type="chain" id="PRO_0000173379" description="Antiseptic resistance protein">
    <location>
        <begin position="1"/>
        <end position="514"/>
    </location>
</feature>
<feature type="topological domain" description="Cytoplasmic" evidence="1">
    <location>
        <begin position="1"/>
        <end position="23"/>
    </location>
</feature>
<feature type="transmembrane region" description="Helical" evidence="2">
    <location>
        <begin position="24"/>
        <end position="41"/>
    </location>
</feature>
<feature type="topological domain" description="Extracellular" evidence="1">
    <location>
        <begin position="42"/>
        <end position="57"/>
    </location>
</feature>
<feature type="transmembrane region" description="Helical" evidence="2">
    <location>
        <begin position="58"/>
        <end position="75"/>
    </location>
</feature>
<feature type="topological domain" description="Cytoplasmic" evidence="1">
    <location>
        <begin position="76"/>
        <end position="86"/>
    </location>
</feature>
<feature type="transmembrane region" description="Helical" evidence="2">
    <location>
        <begin position="87"/>
        <end position="104"/>
    </location>
</feature>
<feature type="topological domain" description="Extracellular" evidence="1">
    <location>
        <begin position="105"/>
        <end position="112"/>
    </location>
</feature>
<feature type="transmembrane region" description="Helical" evidence="2">
    <location>
        <begin position="113"/>
        <end position="130"/>
    </location>
</feature>
<feature type="topological domain" description="Cytoplasmic" evidence="1">
    <location>
        <begin position="131"/>
        <end position="146"/>
    </location>
</feature>
<feature type="transmembrane region" description="Helical" evidence="2">
    <location>
        <begin position="147"/>
        <end position="164"/>
    </location>
</feature>
<feature type="topological domain" description="Extracellular" evidence="1">
    <location>
        <begin position="165"/>
        <end position="172"/>
    </location>
</feature>
<feature type="transmembrane region" description="Helical" evidence="2">
    <location>
        <begin position="173"/>
        <end position="190"/>
    </location>
</feature>
<feature type="topological domain" description="Cytoplasmic" evidence="1">
    <location>
        <begin position="191"/>
        <end position="207"/>
    </location>
</feature>
<feature type="transmembrane region" description="Helical" evidence="2">
    <location>
        <begin position="208"/>
        <end position="225"/>
    </location>
</feature>
<feature type="topological domain" description="Extracellular" evidence="1">
    <location>
        <begin position="226"/>
        <end position="237"/>
    </location>
</feature>
<feature type="transmembrane region" description="Helical" evidence="2">
    <location>
        <begin position="238"/>
        <end position="255"/>
    </location>
</feature>
<feature type="topological domain" description="Cytoplasmic" evidence="1">
    <location>
        <begin position="256"/>
        <end position="278"/>
    </location>
</feature>
<feature type="transmembrane region" description="Helical" evidence="2">
    <location>
        <begin position="279"/>
        <end position="295"/>
    </location>
</feature>
<feature type="topological domain" description="Extracellular" evidence="1">
    <location>
        <begin position="296"/>
        <end position="315"/>
    </location>
</feature>
<feature type="transmembrane region" description="Helical" evidence="2">
    <location>
        <begin position="316"/>
        <end position="333"/>
    </location>
</feature>
<feature type="topological domain" description="Cytoplasmic" evidence="1">
    <location>
        <begin position="334"/>
        <end position="341"/>
    </location>
</feature>
<feature type="transmembrane region" description="Helical" evidence="2">
    <location>
        <begin position="342"/>
        <end position="360"/>
    </location>
</feature>
<feature type="topological domain" description="Extracellular" evidence="1">
    <location>
        <begin position="361"/>
        <end position="369"/>
    </location>
</feature>
<feature type="transmembrane region" description="Helical" evidence="2">
    <location>
        <begin position="370"/>
        <end position="387"/>
    </location>
</feature>
<feature type="topological domain" description="Cytoplasmic" evidence="1">
    <location>
        <begin position="388"/>
        <end position="408"/>
    </location>
</feature>
<feature type="transmembrane region" description="Helical" evidence="2">
    <location>
        <begin position="409"/>
        <end position="426"/>
    </location>
</feature>
<feature type="topological domain" description="Extracellular" evidence="1">
    <location>
        <begin position="427"/>
        <end position="481"/>
    </location>
</feature>
<feature type="transmembrane region" description="Helical" evidence="2">
    <location>
        <begin position="482"/>
        <end position="499"/>
    </location>
</feature>
<feature type="topological domain" description="Cytoplasmic" evidence="1">
    <location>
        <begin position="500"/>
        <end position="514"/>
    </location>
</feature>
<comment type="function">
    <text evidence="1">Confers export-mediated resistance against antiseptic and disinfectant compounds such as intercalating dyes, quaternary ammonium salts and diamidines.</text>
</comment>
<comment type="subcellular location">
    <subcellularLocation>
        <location evidence="1">Cell membrane</location>
        <topology evidence="1">Multi-pass membrane protein</topology>
    </subcellularLocation>
</comment>
<comment type="similarity">
    <text evidence="2">Belongs to the major facilitator superfamily.</text>
</comment>
<protein>
    <recommendedName>
        <fullName>Antiseptic resistance protein</fullName>
    </recommendedName>
</protein>
<organism>
    <name type="scientific">Staphylococcus aureus (strain Mu50 / ATCC 700699)</name>
    <dbReference type="NCBI Taxonomy" id="158878"/>
    <lineage>
        <taxon>Bacteria</taxon>
        <taxon>Bacillati</taxon>
        <taxon>Bacillota</taxon>
        <taxon>Bacilli</taxon>
        <taxon>Bacillales</taxon>
        <taxon>Staphylococcaceae</taxon>
        <taxon>Staphylococcus</taxon>
    </lineage>
</organism>
<sequence>MISFFTKTTDMMTSKKRWTALVVLAVSLFVVTMDMTILIMALPELVRELEPSGTQQLWIVDIYSLVLAGFIIPLSAFADKWGRKKALLTGFALFGLVSLAIFFAESAEFVIAIRFLLGIAGALIMPTTLSMIRVIFENPKERATALAVWSIASSIGAVFGPIIGGALLEQFSWHSAFLINVPFAIIAVVAGLFLLPESKLSKEKSHSWDIPSTILSIAGMIGLVWSIKEFSKEGLADIIPWVVIVLAITMIVIFVKRNLSSSDPMLDVRLFKKRSFSAGTIAAFMTMFAMASVLLLASQWLQVVEELSPFKAGLYLLPMAIGDMVFAPIAPGLAARFGPKIVLPSGIGIAAIGMFIMYFFGHPLSYSTMALALILVGAGMASLAVASALIMLETPTSKAGNAAAVEESMYDLGNVFGVAVLGSLSSMLYRVFLDISSFSSKGIVGDLAHVAEESVVGAVEVAKATGIKQLANEAVTSFNDAFVATALVGGIIMIIISIVVYLLIPKSLDITKQK</sequence>
<proteinExistence type="inferred from homology"/>
<accession>P0A0J8</accession>
<accession>P23215</accession>
<name>QACA_STAAM</name>
<reference key="1">
    <citation type="journal article" date="2001" name="Lancet">
        <title>Whole genome sequencing of meticillin-resistant Staphylococcus aureus.</title>
        <authorList>
            <person name="Kuroda M."/>
            <person name="Ohta T."/>
            <person name="Uchiyama I."/>
            <person name="Baba T."/>
            <person name="Yuzawa H."/>
            <person name="Kobayashi I."/>
            <person name="Cui L."/>
            <person name="Oguchi A."/>
            <person name="Aoki K."/>
            <person name="Nagai Y."/>
            <person name="Lian J.-Q."/>
            <person name="Ito T."/>
            <person name="Kanamori M."/>
            <person name="Matsumaru H."/>
            <person name="Maruyama A."/>
            <person name="Murakami H."/>
            <person name="Hosoyama A."/>
            <person name="Mizutani-Ui Y."/>
            <person name="Takahashi N.K."/>
            <person name="Sawano T."/>
            <person name="Inoue R."/>
            <person name="Kaito C."/>
            <person name="Sekimizu K."/>
            <person name="Hirakawa H."/>
            <person name="Kuhara S."/>
            <person name="Goto S."/>
            <person name="Yabuzaki J."/>
            <person name="Kanehisa M."/>
            <person name="Yamashita A."/>
            <person name="Oshima K."/>
            <person name="Furuya K."/>
            <person name="Yoshino C."/>
            <person name="Shiba T."/>
            <person name="Hattori M."/>
            <person name="Ogasawara N."/>
            <person name="Hayashi H."/>
            <person name="Hiramatsu K."/>
        </authorList>
    </citation>
    <scope>NUCLEOTIDE SEQUENCE [LARGE SCALE GENOMIC DNA]</scope>
    <source>
        <strain>Mu50 / ATCC 700699</strain>
        <plasmid>VRSAp</plasmid>
    </source>
</reference>
<gene>
    <name type="primary">qacA</name>
    <name type="ordered locus">SAVP032</name>
</gene>
<dbReference type="EMBL" id="AP003367">
    <property type="protein sequence ID" value="BAB47540.1"/>
    <property type="molecule type" value="Genomic_DNA"/>
</dbReference>
<dbReference type="SMR" id="P0A0J8"/>
<dbReference type="KEGG" id="sav:SAVP032"/>
<dbReference type="HOGENOM" id="CLU_000960_28_2_9"/>
<dbReference type="PhylomeDB" id="P0A0J8"/>
<dbReference type="Proteomes" id="UP000002481">
    <property type="component" value="Plasmid VRSAp"/>
</dbReference>
<dbReference type="GO" id="GO:0005886">
    <property type="term" value="C:plasma membrane"/>
    <property type="evidence" value="ECO:0007669"/>
    <property type="project" value="UniProtKB-SubCell"/>
</dbReference>
<dbReference type="GO" id="GO:0022857">
    <property type="term" value="F:transmembrane transporter activity"/>
    <property type="evidence" value="ECO:0007669"/>
    <property type="project" value="InterPro"/>
</dbReference>
<dbReference type="GO" id="GO:0046677">
    <property type="term" value="P:response to antibiotic"/>
    <property type="evidence" value="ECO:0007669"/>
    <property type="project" value="UniProtKB-KW"/>
</dbReference>
<dbReference type="CDD" id="cd17321">
    <property type="entry name" value="MFS_MMR_MDR_like"/>
    <property type="match status" value="1"/>
</dbReference>
<dbReference type="Gene3D" id="1.20.1250.20">
    <property type="entry name" value="MFS general substrate transporter like domains"/>
    <property type="match status" value="2"/>
</dbReference>
<dbReference type="InterPro" id="IPR011701">
    <property type="entry name" value="MFS"/>
</dbReference>
<dbReference type="InterPro" id="IPR020846">
    <property type="entry name" value="MFS_dom"/>
</dbReference>
<dbReference type="InterPro" id="IPR036259">
    <property type="entry name" value="MFS_trans_sf"/>
</dbReference>
<dbReference type="InterPro" id="IPR005829">
    <property type="entry name" value="Sugar_transporter_CS"/>
</dbReference>
<dbReference type="NCBIfam" id="NF000089">
    <property type="entry name" value="qac_MFS_AB"/>
    <property type="match status" value="1"/>
</dbReference>
<dbReference type="PANTHER" id="PTHR42718">
    <property type="entry name" value="MAJOR FACILITATOR SUPERFAMILY MULTIDRUG TRANSPORTER MFSC"/>
    <property type="match status" value="1"/>
</dbReference>
<dbReference type="PANTHER" id="PTHR42718:SF47">
    <property type="entry name" value="METHYL VIOLOGEN RESISTANCE PROTEIN SMVA"/>
    <property type="match status" value="1"/>
</dbReference>
<dbReference type="Pfam" id="PF07690">
    <property type="entry name" value="MFS_1"/>
    <property type="match status" value="1"/>
</dbReference>
<dbReference type="SUPFAM" id="SSF103473">
    <property type="entry name" value="MFS general substrate transporter"/>
    <property type="match status" value="1"/>
</dbReference>
<dbReference type="PROSITE" id="PS50850">
    <property type="entry name" value="MFS"/>
    <property type="match status" value="1"/>
</dbReference>
<dbReference type="PROSITE" id="PS00216">
    <property type="entry name" value="SUGAR_TRANSPORT_1"/>
    <property type="match status" value="1"/>
</dbReference>
<evidence type="ECO:0000250" key="1"/>
<evidence type="ECO:0000305" key="2"/>
<geneLocation type="plasmid">
    <name>VRSAp</name>
</geneLocation>
<keyword id="KW-0046">Antibiotic resistance</keyword>
<keyword id="KW-1003">Cell membrane</keyword>
<keyword id="KW-0472">Membrane</keyword>
<keyword id="KW-0614">Plasmid</keyword>
<keyword id="KW-0812">Transmembrane</keyword>
<keyword id="KW-1133">Transmembrane helix</keyword>
<keyword id="KW-0813">Transport</keyword>